<organism>
    <name type="scientific">Lychas mucronatus</name>
    <name type="common">Chinese swimming scorpion</name>
    <dbReference type="NCBI Taxonomy" id="172552"/>
    <lineage>
        <taxon>Eukaryota</taxon>
        <taxon>Metazoa</taxon>
        <taxon>Ecdysozoa</taxon>
        <taxon>Arthropoda</taxon>
        <taxon>Chelicerata</taxon>
        <taxon>Arachnida</taxon>
        <taxon>Scorpiones</taxon>
        <taxon>Buthida</taxon>
        <taxon>Buthoidea</taxon>
        <taxon>Buthidae</taxon>
        <taxon>Lychas</taxon>
    </lineage>
</organism>
<evidence type="ECO:0000250" key="1"/>
<evidence type="ECO:0000255" key="2"/>
<comment type="subcellular location">
    <subcellularLocation>
        <location evidence="1">Secreted</location>
    </subcellularLocation>
</comment>
<comment type="tissue specificity">
    <text>Expressed by the venom gland.</text>
</comment>
<name>KTXG_LYCMC</name>
<protein>
    <recommendedName>
        <fullName>Putative neurotoxin-G</fullName>
    </recommendedName>
</protein>
<dbReference type="EMBL" id="GT028601">
    <property type="status" value="NOT_ANNOTATED_CDS"/>
    <property type="molecule type" value="mRNA"/>
</dbReference>
<dbReference type="SMR" id="P0CI87"/>
<dbReference type="GO" id="GO:0005576">
    <property type="term" value="C:extracellular region"/>
    <property type="evidence" value="ECO:0007669"/>
    <property type="project" value="UniProtKB-SubCell"/>
</dbReference>
<dbReference type="GO" id="GO:0099106">
    <property type="term" value="F:ion channel regulator activity"/>
    <property type="evidence" value="ECO:0007669"/>
    <property type="project" value="UniProtKB-KW"/>
</dbReference>
<dbReference type="GO" id="GO:0090729">
    <property type="term" value="F:toxin activity"/>
    <property type="evidence" value="ECO:0007669"/>
    <property type="project" value="UniProtKB-KW"/>
</dbReference>
<sequence>MFAMVTVTVLLLISSGIFCENEKLCSNGGTKCTHHCGKNNTVGICHGQNGNLKCECVEYKRKMF</sequence>
<proteinExistence type="evidence at transcript level"/>
<reference key="1">
    <citation type="journal article" date="2010" name="BMC Genomics">
        <title>Comparative venom gland transcriptome analysis of the scorpion Lychas mucronatus reveals intraspecific toxic gene diversity and new venomous components.</title>
        <authorList>
            <person name="Zhao R."/>
            <person name="Ma Y."/>
            <person name="He Y."/>
            <person name="Di Z."/>
            <person name="Wu Y.-L."/>
            <person name="Cao Z.-J."/>
            <person name="Li W.-X."/>
        </authorList>
    </citation>
    <scope>NUCLEOTIDE SEQUENCE [MRNA]</scope>
    <source>
        <strain>Yunnan</strain>
        <tissue>Venom gland</tissue>
    </source>
</reference>
<accession>P0CI87</accession>
<feature type="signal peptide" evidence="2">
    <location>
        <begin position="1"/>
        <end position="19"/>
    </location>
</feature>
<feature type="chain" id="PRO_0000403839" description="Putative neurotoxin-G">
    <location>
        <begin position="20"/>
        <end position="64"/>
    </location>
</feature>
<feature type="disulfide bond" evidence="1">
    <location>
        <begin position="25"/>
        <end position="45"/>
    </location>
</feature>
<feature type="disulfide bond" evidence="1">
    <location>
        <begin position="32"/>
        <end position="54"/>
    </location>
</feature>
<feature type="disulfide bond" evidence="1">
    <location>
        <begin position="36"/>
        <end position="56"/>
    </location>
</feature>
<keyword id="KW-1015">Disulfide bond</keyword>
<keyword id="KW-0872">Ion channel impairing toxin</keyword>
<keyword id="KW-0528">Neurotoxin</keyword>
<keyword id="KW-0964">Secreted</keyword>
<keyword id="KW-0732">Signal</keyword>
<keyword id="KW-0800">Toxin</keyword>